<name>DHAS_MYCSM</name>
<comment type="function">
    <text evidence="1">Catalyzes the NADPH-dependent formation of L-aspartate-semialdehyde (L-ASA) by the reductive dephosphorylation of L-aspartyl-4-phosphate.</text>
</comment>
<comment type="catalytic activity">
    <reaction evidence="1">
        <text>L-aspartate 4-semialdehyde + phosphate + NADP(+) = 4-phospho-L-aspartate + NADPH + H(+)</text>
        <dbReference type="Rhea" id="RHEA:24284"/>
        <dbReference type="ChEBI" id="CHEBI:15378"/>
        <dbReference type="ChEBI" id="CHEBI:43474"/>
        <dbReference type="ChEBI" id="CHEBI:57535"/>
        <dbReference type="ChEBI" id="CHEBI:57783"/>
        <dbReference type="ChEBI" id="CHEBI:58349"/>
        <dbReference type="ChEBI" id="CHEBI:537519"/>
        <dbReference type="EC" id="1.2.1.11"/>
    </reaction>
</comment>
<comment type="pathway">
    <text evidence="1">Amino-acid biosynthesis; L-lysine biosynthesis via DAP pathway; (S)-tetrahydrodipicolinate from L-aspartate: step 2/4.</text>
</comment>
<comment type="pathway">
    <text evidence="1">Amino-acid biosynthesis; L-methionine biosynthesis via de novo pathway; L-homoserine from L-aspartate: step 2/3.</text>
</comment>
<comment type="pathway">
    <text evidence="1">Amino-acid biosynthesis; L-threonine biosynthesis; L-threonine from L-aspartate: step 2/5.</text>
</comment>
<comment type="subunit">
    <text evidence="1">Homodimer.</text>
</comment>
<comment type="similarity">
    <text evidence="1">Belongs to the aspartate-semialdehyde dehydrogenase family.</text>
</comment>
<feature type="chain" id="PRO_0000141382" description="Aspartate-semialdehyde dehydrogenase">
    <location>
        <begin position="1"/>
        <end position="346"/>
    </location>
</feature>
<feature type="active site" description="Acyl-thioester intermediate" evidence="1">
    <location>
        <position position="131"/>
    </location>
</feature>
<feature type="active site" description="Proton acceptor" evidence="1">
    <location>
        <position position="257"/>
    </location>
</feature>
<feature type="binding site" evidence="1">
    <location>
        <begin position="10"/>
        <end position="13"/>
    </location>
    <ligand>
        <name>NADP(+)</name>
        <dbReference type="ChEBI" id="CHEBI:58349"/>
    </ligand>
</feature>
<feature type="binding site" evidence="1">
    <location>
        <begin position="38"/>
        <end position="39"/>
    </location>
    <ligand>
        <name>NADP(+)</name>
        <dbReference type="ChEBI" id="CHEBI:58349"/>
    </ligand>
</feature>
<feature type="binding site" evidence="1">
    <location>
        <position position="98"/>
    </location>
    <ligand>
        <name>phosphate</name>
        <dbReference type="ChEBI" id="CHEBI:43474"/>
    </ligand>
</feature>
<feature type="binding site" evidence="1">
    <location>
        <position position="158"/>
    </location>
    <ligand>
        <name>substrate</name>
    </ligand>
</feature>
<feature type="binding site" evidence="1">
    <location>
        <begin position="161"/>
        <end position="162"/>
    </location>
    <ligand>
        <name>NADP(+)</name>
        <dbReference type="ChEBI" id="CHEBI:58349"/>
    </ligand>
</feature>
<feature type="binding site" evidence="1">
    <location>
        <position position="228"/>
    </location>
    <ligand>
        <name>phosphate</name>
        <dbReference type="ChEBI" id="CHEBI:43474"/>
    </ligand>
</feature>
<feature type="binding site" evidence="1">
    <location>
        <position position="250"/>
    </location>
    <ligand>
        <name>substrate</name>
    </ligand>
</feature>
<feature type="binding site" evidence="1">
    <location>
        <position position="326"/>
    </location>
    <ligand>
        <name>NADP(+)</name>
        <dbReference type="ChEBI" id="CHEBI:58349"/>
    </ligand>
</feature>
<reference key="1">
    <citation type="journal article" date="1994" name="Mol. Microbiol.">
        <title>Isolation and characterization of the aspartokinase and aspartate semialdehyde dehydrogenase operon from mycobacteria.</title>
        <authorList>
            <person name="Cirillo J.D."/>
            <person name="Weisbrod T.R."/>
            <person name="Pascopella L."/>
            <person name="Bloom B.R."/>
            <person name="Jacobs W.R. Jr."/>
        </authorList>
    </citation>
    <scope>NUCLEOTIDE SEQUENCE [GENOMIC DNA]</scope>
    <source>
        <strain>ATCC 607 / DSM 43465 / JCM 20379 / NBRC 3207 / NRRL B-692</strain>
    </source>
</reference>
<dbReference type="EC" id="1.2.1.11" evidence="1"/>
<dbReference type="EMBL" id="Z17372">
    <property type="protein sequence ID" value="CAA78986.1"/>
    <property type="molecule type" value="Genomic_DNA"/>
</dbReference>
<dbReference type="PIR" id="S42423">
    <property type="entry name" value="S42423"/>
</dbReference>
<dbReference type="SMR" id="P41404"/>
<dbReference type="UniPathway" id="UPA00034">
    <property type="reaction ID" value="UER00016"/>
</dbReference>
<dbReference type="UniPathway" id="UPA00050">
    <property type="reaction ID" value="UER00463"/>
</dbReference>
<dbReference type="UniPathway" id="UPA00051">
    <property type="reaction ID" value="UER00464"/>
</dbReference>
<dbReference type="GO" id="GO:0004073">
    <property type="term" value="F:aspartate-semialdehyde dehydrogenase activity"/>
    <property type="evidence" value="ECO:0007669"/>
    <property type="project" value="UniProtKB-UniRule"/>
</dbReference>
<dbReference type="GO" id="GO:0051287">
    <property type="term" value="F:NAD binding"/>
    <property type="evidence" value="ECO:0007669"/>
    <property type="project" value="InterPro"/>
</dbReference>
<dbReference type="GO" id="GO:0050661">
    <property type="term" value="F:NADP binding"/>
    <property type="evidence" value="ECO:0007669"/>
    <property type="project" value="UniProtKB-UniRule"/>
</dbReference>
<dbReference type="GO" id="GO:0046983">
    <property type="term" value="F:protein dimerization activity"/>
    <property type="evidence" value="ECO:0007669"/>
    <property type="project" value="InterPro"/>
</dbReference>
<dbReference type="GO" id="GO:0071266">
    <property type="term" value="P:'de novo' L-methionine biosynthetic process"/>
    <property type="evidence" value="ECO:0007669"/>
    <property type="project" value="UniProtKB-UniRule"/>
</dbReference>
<dbReference type="GO" id="GO:0019877">
    <property type="term" value="P:diaminopimelate biosynthetic process"/>
    <property type="evidence" value="ECO:0007669"/>
    <property type="project" value="UniProtKB-UniRule"/>
</dbReference>
<dbReference type="GO" id="GO:0009097">
    <property type="term" value="P:isoleucine biosynthetic process"/>
    <property type="evidence" value="ECO:0007669"/>
    <property type="project" value="InterPro"/>
</dbReference>
<dbReference type="GO" id="GO:0009089">
    <property type="term" value="P:lysine biosynthetic process via diaminopimelate"/>
    <property type="evidence" value="ECO:0007669"/>
    <property type="project" value="UniProtKB-UniRule"/>
</dbReference>
<dbReference type="GO" id="GO:0009088">
    <property type="term" value="P:threonine biosynthetic process"/>
    <property type="evidence" value="ECO:0007669"/>
    <property type="project" value="UniProtKB-UniRule"/>
</dbReference>
<dbReference type="CDD" id="cd18131">
    <property type="entry name" value="ASADH_C_bac_euk_like"/>
    <property type="match status" value="1"/>
</dbReference>
<dbReference type="CDD" id="cd02316">
    <property type="entry name" value="VcASADH2_like_N"/>
    <property type="match status" value="1"/>
</dbReference>
<dbReference type="Gene3D" id="3.30.360.10">
    <property type="entry name" value="Dihydrodipicolinate Reductase, domain 2"/>
    <property type="match status" value="1"/>
</dbReference>
<dbReference type="Gene3D" id="3.40.50.720">
    <property type="entry name" value="NAD(P)-binding Rossmann-like Domain"/>
    <property type="match status" value="1"/>
</dbReference>
<dbReference type="HAMAP" id="MF_02121">
    <property type="entry name" value="ASADH"/>
    <property type="match status" value="1"/>
</dbReference>
<dbReference type="InterPro" id="IPR000319">
    <property type="entry name" value="Asp-semialdehyde_DH_CS"/>
</dbReference>
<dbReference type="InterPro" id="IPR012080">
    <property type="entry name" value="Asp_semialdehyde_DH"/>
</dbReference>
<dbReference type="InterPro" id="IPR005986">
    <property type="entry name" value="Asp_semialdehyde_DH_beta"/>
</dbReference>
<dbReference type="InterPro" id="IPR036291">
    <property type="entry name" value="NAD(P)-bd_dom_sf"/>
</dbReference>
<dbReference type="InterPro" id="IPR000534">
    <property type="entry name" value="Semialdehyde_DH_NAD-bd"/>
</dbReference>
<dbReference type="InterPro" id="IPR012280">
    <property type="entry name" value="Semialdhyde_DH_dimer_dom"/>
</dbReference>
<dbReference type="NCBIfam" id="TIGR01296">
    <property type="entry name" value="asd_B"/>
    <property type="match status" value="1"/>
</dbReference>
<dbReference type="NCBIfam" id="NF011456">
    <property type="entry name" value="PRK14874.1"/>
    <property type="match status" value="1"/>
</dbReference>
<dbReference type="PANTHER" id="PTHR46278:SF2">
    <property type="entry name" value="ASPARTATE-SEMIALDEHYDE DEHYDROGENASE"/>
    <property type="match status" value="1"/>
</dbReference>
<dbReference type="PANTHER" id="PTHR46278">
    <property type="entry name" value="DEHYDROGENASE, PUTATIVE-RELATED"/>
    <property type="match status" value="1"/>
</dbReference>
<dbReference type="Pfam" id="PF01118">
    <property type="entry name" value="Semialdhyde_dh"/>
    <property type="match status" value="1"/>
</dbReference>
<dbReference type="Pfam" id="PF02774">
    <property type="entry name" value="Semialdhyde_dhC"/>
    <property type="match status" value="1"/>
</dbReference>
<dbReference type="PIRSF" id="PIRSF000148">
    <property type="entry name" value="ASA_dh"/>
    <property type="match status" value="1"/>
</dbReference>
<dbReference type="SMART" id="SM00859">
    <property type="entry name" value="Semialdhyde_dh"/>
    <property type="match status" value="1"/>
</dbReference>
<dbReference type="SUPFAM" id="SSF55347">
    <property type="entry name" value="Glyceraldehyde-3-phosphate dehydrogenase-like, C-terminal domain"/>
    <property type="match status" value="1"/>
</dbReference>
<dbReference type="SUPFAM" id="SSF51735">
    <property type="entry name" value="NAD(P)-binding Rossmann-fold domains"/>
    <property type="match status" value="1"/>
</dbReference>
<dbReference type="PROSITE" id="PS01103">
    <property type="entry name" value="ASD"/>
    <property type="match status" value="1"/>
</dbReference>
<accession>P41404</accession>
<keyword id="KW-0028">Amino-acid biosynthesis</keyword>
<keyword id="KW-0220">Diaminopimelate biosynthesis</keyword>
<keyword id="KW-0457">Lysine biosynthesis</keyword>
<keyword id="KW-0486">Methionine biosynthesis</keyword>
<keyword id="KW-0521">NADP</keyword>
<keyword id="KW-0560">Oxidoreductase</keyword>
<keyword id="KW-0791">Threonine biosynthesis</keyword>
<gene>
    <name evidence="1" type="primary">asd</name>
</gene>
<organism>
    <name type="scientific">Mycolicibacterium smegmatis</name>
    <name type="common">Mycobacterium smegmatis</name>
    <dbReference type="NCBI Taxonomy" id="1772"/>
    <lineage>
        <taxon>Bacteria</taxon>
        <taxon>Bacillati</taxon>
        <taxon>Actinomycetota</taxon>
        <taxon>Actinomycetes</taxon>
        <taxon>Mycobacteriales</taxon>
        <taxon>Mycobacteriaceae</taxon>
        <taxon>Mycolicibacterium</taxon>
    </lineage>
</organism>
<sequence>MVNIGVVGATGQGRQVMRNLLEQRNFPATSVRFFASPRSEGKKLTFRGQEIEVENAETADPSGLDIALFSAGATMSRVQAPRFAEAGVIVVDNSSAFRKDPDVPLVVSEVNFDRDVRGKKLAKGIIANPNCTTMAAMPVLKPLHEEAGLQRLIVSSYQAVSGSGIAGVEELAGQARPVIDGVEQLVHDGSALQYPAPNKYVAPIAFNIVPLAGNYVDDGSGETDEDQKLRNESRKILGIPELLVSGTCVRVPVFSGHSLSINAEFSQPISVERTKELLSAAAGVKLVDVPTPLAAAGIDDCLVGRIRQDPGVPDGRGLALFVSGDNLRKGAALNTIQIAELLAADL</sequence>
<evidence type="ECO:0000255" key="1">
    <source>
        <dbReference type="HAMAP-Rule" id="MF_02121"/>
    </source>
</evidence>
<protein>
    <recommendedName>
        <fullName evidence="1">Aspartate-semialdehyde dehydrogenase</fullName>
        <shortName evidence="1">ASA dehydrogenase</shortName>
        <shortName evidence="1">ASADH</shortName>
        <ecNumber evidence="1">1.2.1.11</ecNumber>
    </recommendedName>
    <alternativeName>
        <fullName evidence="1">Aspartate-beta-semialdehyde dehydrogenase</fullName>
    </alternativeName>
</protein>
<proteinExistence type="inferred from homology"/>